<accession>B9M0D9</accession>
<name>RLMH_GEODF</name>
<proteinExistence type="inferred from homology"/>
<organism>
    <name type="scientific">Geotalea daltonii (strain DSM 22248 / JCM 15807 / FRC-32)</name>
    <name type="common">Geobacter daltonii</name>
    <dbReference type="NCBI Taxonomy" id="316067"/>
    <lineage>
        <taxon>Bacteria</taxon>
        <taxon>Pseudomonadati</taxon>
        <taxon>Thermodesulfobacteriota</taxon>
        <taxon>Desulfuromonadia</taxon>
        <taxon>Geobacterales</taxon>
        <taxon>Geobacteraceae</taxon>
        <taxon>Geotalea</taxon>
    </lineage>
</organism>
<keyword id="KW-0963">Cytoplasm</keyword>
<keyword id="KW-0489">Methyltransferase</keyword>
<keyword id="KW-1185">Reference proteome</keyword>
<keyword id="KW-0698">rRNA processing</keyword>
<keyword id="KW-0949">S-adenosyl-L-methionine</keyword>
<keyword id="KW-0808">Transferase</keyword>
<sequence length="153" mass="17593">MRLKVLWVGKTQEEWVRRGIDEYAGRIGRYMSIDLAEARDEKGAAVEAMREREGERLLKLLPKNARLVLLDERGEQMSSPELARFLATNRDGGTQELVFVIGGAYGFSDSLRAKAFKTISLSRMTFTHQMVRIFLLEQLYRGFTIINGEPYHH</sequence>
<feature type="chain" id="PRO_1000212455" description="Ribosomal RNA large subunit methyltransferase H">
    <location>
        <begin position="1"/>
        <end position="153"/>
    </location>
</feature>
<feature type="binding site" evidence="1">
    <location>
        <position position="70"/>
    </location>
    <ligand>
        <name>S-adenosyl-L-methionine</name>
        <dbReference type="ChEBI" id="CHEBI:59789"/>
    </ligand>
</feature>
<feature type="binding site" evidence="1">
    <location>
        <position position="102"/>
    </location>
    <ligand>
        <name>S-adenosyl-L-methionine</name>
        <dbReference type="ChEBI" id="CHEBI:59789"/>
    </ligand>
</feature>
<feature type="binding site" evidence="1">
    <location>
        <begin position="121"/>
        <end position="126"/>
    </location>
    <ligand>
        <name>S-adenosyl-L-methionine</name>
        <dbReference type="ChEBI" id="CHEBI:59789"/>
    </ligand>
</feature>
<gene>
    <name evidence="1" type="primary">rlmH</name>
    <name type="ordered locus">Geob_0611</name>
</gene>
<protein>
    <recommendedName>
        <fullName evidence="1">Ribosomal RNA large subunit methyltransferase H</fullName>
        <ecNumber evidence="1">2.1.1.177</ecNumber>
    </recommendedName>
    <alternativeName>
        <fullName evidence="1">23S rRNA (pseudouridine1915-N3)-methyltransferase</fullName>
    </alternativeName>
    <alternativeName>
        <fullName evidence="1">23S rRNA m3Psi1915 methyltransferase</fullName>
    </alternativeName>
    <alternativeName>
        <fullName evidence="1">rRNA (pseudouridine-N3-)-methyltransferase RlmH</fullName>
    </alternativeName>
</protein>
<evidence type="ECO:0000255" key="1">
    <source>
        <dbReference type="HAMAP-Rule" id="MF_00658"/>
    </source>
</evidence>
<dbReference type="EC" id="2.1.1.177" evidence="1"/>
<dbReference type="EMBL" id="CP001390">
    <property type="protein sequence ID" value="ACM18976.1"/>
    <property type="molecule type" value="Genomic_DNA"/>
</dbReference>
<dbReference type="RefSeq" id="WP_012645705.1">
    <property type="nucleotide sequence ID" value="NC_011979.1"/>
</dbReference>
<dbReference type="SMR" id="B9M0D9"/>
<dbReference type="STRING" id="316067.Geob_0611"/>
<dbReference type="KEGG" id="geo:Geob_0611"/>
<dbReference type="eggNOG" id="COG1576">
    <property type="taxonomic scope" value="Bacteria"/>
</dbReference>
<dbReference type="HOGENOM" id="CLU_100552_2_0_7"/>
<dbReference type="OrthoDB" id="9806643at2"/>
<dbReference type="Proteomes" id="UP000007721">
    <property type="component" value="Chromosome"/>
</dbReference>
<dbReference type="GO" id="GO:0005737">
    <property type="term" value="C:cytoplasm"/>
    <property type="evidence" value="ECO:0007669"/>
    <property type="project" value="UniProtKB-SubCell"/>
</dbReference>
<dbReference type="GO" id="GO:0070038">
    <property type="term" value="F:rRNA (pseudouridine-N3-)-methyltransferase activity"/>
    <property type="evidence" value="ECO:0007669"/>
    <property type="project" value="UniProtKB-UniRule"/>
</dbReference>
<dbReference type="CDD" id="cd18081">
    <property type="entry name" value="RlmH-like"/>
    <property type="match status" value="1"/>
</dbReference>
<dbReference type="Gene3D" id="3.40.1280.10">
    <property type="match status" value="1"/>
</dbReference>
<dbReference type="HAMAP" id="MF_00658">
    <property type="entry name" value="23SrRNA_methyltr_H"/>
    <property type="match status" value="1"/>
</dbReference>
<dbReference type="InterPro" id="IPR029028">
    <property type="entry name" value="Alpha/beta_knot_MTases"/>
</dbReference>
<dbReference type="InterPro" id="IPR003742">
    <property type="entry name" value="RlmH-like"/>
</dbReference>
<dbReference type="InterPro" id="IPR029026">
    <property type="entry name" value="tRNA_m1G_MTases_N"/>
</dbReference>
<dbReference type="PANTHER" id="PTHR33603">
    <property type="entry name" value="METHYLTRANSFERASE"/>
    <property type="match status" value="1"/>
</dbReference>
<dbReference type="PANTHER" id="PTHR33603:SF1">
    <property type="entry name" value="RIBOSOMAL RNA LARGE SUBUNIT METHYLTRANSFERASE H"/>
    <property type="match status" value="1"/>
</dbReference>
<dbReference type="Pfam" id="PF02590">
    <property type="entry name" value="SPOUT_MTase"/>
    <property type="match status" value="1"/>
</dbReference>
<dbReference type="PIRSF" id="PIRSF004505">
    <property type="entry name" value="MT_bac"/>
    <property type="match status" value="1"/>
</dbReference>
<dbReference type="SUPFAM" id="SSF75217">
    <property type="entry name" value="alpha/beta knot"/>
    <property type="match status" value="1"/>
</dbReference>
<comment type="function">
    <text evidence="1">Specifically methylates the pseudouridine at position 1915 (m3Psi1915) in 23S rRNA.</text>
</comment>
<comment type="catalytic activity">
    <reaction evidence="1">
        <text>pseudouridine(1915) in 23S rRNA + S-adenosyl-L-methionine = N(3)-methylpseudouridine(1915) in 23S rRNA + S-adenosyl-L-homocysteine + H(+)</text>
        <dbReference type="Rhea" id="RHEA:42752"/>
        <dbReference type="Rhea" id="RHEA-COMP:10221"/>
        <dbReference type="Rhea" id="RHEA-COMP:10222"/>
        <dbReference type="ChEBI" id="CHEBI:15378"/>
        <dbReference type="ChEBI" id="CHEBI:57856"/>
        <dbReference type="ChEBI" id="CHEBI:59789"/>
        <dbReference type="ChEBI" id="CHEBI:65314"/>
        <dbReference type="ChEBI" id="CHEBI:74486"/>
        <dbReference type="EC" id="2.1.1.177"/>
    </reaction>
</comment>
<comment type="subunit">
    <text evidence="1">Homodimer.</text>
</comment>
<comment type="subcellular location">
    <subcellularLocation>
        <location evidence="1">Cytoplasm</location>
    </subcellularLocation>
</comment>
<comment type="similarity">
    <text evidence="1">Belongs to the RNA methyltransferase RlmH family.</text>
</comment>
<reference key="1">
    <citation type="submission" date="2009-01" db="EMBL/GenBank/DDBJ databases">
        <title>Complete sequence of Geobacter sp. FRC-32.</title>
        <authorList>
            <consortium name="US DOE Joint Genome Institute"/>
            <person name="Lucas S."/>
            <person name="Copeland A."/>
            <person name="Lapidus A."/>
            <person name="Glavina del Rio T."/>
            <person name="Dalin E."/>
            <person name="Tice H."/>
            <person name="Bruce D."/>
            <person name="Goodwin L."/>
            <person name="Pitluck S."/>
            <person name="Saunders E."/>
            <person name="Brettin T."/>
            <person name="Detter J.C."/>
            <person name="Han C."/>
            <person name="Larimer F."/>
            <person name="Land M."/>
            <person name="Hauser L."/>
            <person name="Kyrpides N."/>
            <person name="Ovchinnikova G."/>
            <person name="Kostka J."/>
            <person name="Richardson P."/>
        </authorList>
    </citation>
    <scope>NUCLEOTIDE SEQUENCE [LARGE SCALE GENOMIC DNA]</scope>
    <source>
        <strain>DSM 22248 / JCM 15807 / FRC-32</strain>
    </source>
</reference>